<gene>
    <name type="primary">CDCP1</name>
    <name type="synonym">TRASK</name>
    <name type="ORF">UNQ2486/PRO5773</name>
</gene>
<comment type="function">
    <text evidence="4 6 9 12 13 14">May be involved in cell adhesion and cell matrix association. May play a role in the regulation of anchorage versus migration or proliferation versus differentiation via its phosphorylation. May be a novel marker for leukemia diagnosis and for immature hematopoietic stem cell subsets. Belongs to the tetraspanin web involved in tumor progression and metastasis.</text>
</comment>
<comment type="subunit">
    <text evidence="11 12">Interacts with CDH2/N-cadherin, CDH3/P-cadherin, SDC1/syndecan-1, SDC4/syndecan-4 and the serine protease ST14/MT-SP1. Also interacts with SRC and PRKCG/protein kinase C gamma.</text>
</comment>
<comment type="interaction">
    <interactant intactId="EBI-1019736">
        <id>Q9H5V8</id>
    </interactant>
    <interactant intactId="EBI-727004">
        <id>O00560</id>
        <label>SDCBP</label>
    </interactant>
    <organismsDiffer>false</organismsDiffer>
    <experiments>6</experiments>
</comment>
<comment type="interaction">
    <interactant intactId="EBI-1019736">
        <id>Q9H5V8</id>
    </interactant>
    <interactant intactId="EBI-621482">
        <id>P12931</id>
        <label>SRC</label>
    </interactant>
    <organismsDiffer>false</organismsDiffer>
    <experiments>3</experiments>
</comment>
<comment type="interaction">
    <interactant intactId="EBI-1019736">
        <id>Q9H5V8</id>
    </interactant>
    <interactant intactId="EBI-515331">
        <id>P07947</id>
        <label>YES1</label>
    </interactant>
    <organismsDiffer>false</organismsDiffer>
    <experiments>2</experiments>
</comment>
<comment type="subcellular location">
    <molecule>Isoform 1</molecule>
    <subcellularLocation>
        <location evidence="18">Cell membrane</location>
        <topology evidence="18">Single-pass membrane protein</topology>
    </subcellularLocation>
    <text>Shedding may also lead to a soluble peptide.</text>
</comment>
<comment type="subcellular location">
    <molecule>Isoform 3</molecule>
    <subcellularLocation>
        <location>Secreted</location>
    </subcellularLocation>
</comment>
<comment type="alternative products">
    <event type="alternative splicing"/>
    <isoform>
        <id>Q9H5V8-1</id>
        <name>1</name>
        <sequence type="displayed"/>
    </isoform>
    <isoform>
        <id>Q9H5V8-2</id>
        <name>2</name>
        <sequence type="described" ref="VSP_017432"/>
    </isoform>
    <isoform>
        <id>Q9H5V8-3</id>
        <name>3</name>
        <sequence type="described" ref="VSP_017433 VSP_017434"/>
    </isoform>
</comment>
<comment type="tissue specificity">
    <text evidence="4 5 9 12">Highly expressed in mitotic cells with low expression during interphase. Detected at highest levels in skeletal muscle and colon with lower levels in kidney, small intestine, placenta and lung. Up-regulated in a number of human tumor cell lines, as well as in colorectal cancer, breast carcinoma and lung cancer. Also expressed in cells with phenotypes reminiscent of mesenchymal stem cells and neural stem cells.</text>
</comment>
<comment type="PTM">
    <text evidence="5 8 12 14">Phosphorylated on tyrosine by kinases of the SRC family such as SRC and YES as well as by the protein kinase C gamma/PRKCG. Dephosphorylated by phosphotyrosine phosphatases. Also phosphorylated by suramin, a heparin analog. Tyrosine phosphorylated in response to dissociation of integrin alpha-6 beta-4 from laminin-5.</text>
</comment>
<comment type="PTM">
    <text evidence="5 8 12">N-glycosylated.</text>
</comment>
<comment type="PTM">
    <text>A soluble form may also be produced by proteolytic cleavage at the cell surface (shedding). Another peptide of 80 kDa (p80) is present in cultured keratinocytes probably due to tryptic cleavage at an unidentified site on its N-terminal side. Converted to p80 by plasmin, a trypsin-like protease.</text>
</comment>
<comment type="sequence caution" evidence="18">
    <conflict type="erroneous initiation">
        <sequence resource="EMBL-CDS" id="BAB15388"/>
    </conflict>
    <text>Truncated N-terminus.</text>
</comment>
<feature type="signal peptide" evidence="5 12">
    <location>
        <begin position="1"/>
        <end position="29"/>
    </location>
</feature>
<feature type="chain" id="PRO_0000226249" description="CUB domain-containing protein 1">
    <location>
        <begin position="30"/>
        <end position="836"/>
    </location>
</feature>
<feature type="topological domain" description="Extracellular" evidence="2">
    <location>
        <begin position="30"/>
        <end position="667"/>
    </location>
</feature>
<feature type="transmembrane region" description="Helical" evidence="2">
    <location>
        <begin position="668"/>
        <end position="688"/>
    </location>
</feature>
<feature type="topological domain" description="Cytoplasmic" evidence="2">
    <location>
        <begin position="689"/>
        <end position="836"/>
    </location>
</feature>
<feature type="domain" description="CUB">
    <location>
        <begin position="417"/>
        <end position="544"/>
    </location>
</feature>
<feature type="region of interest" description="Disordered" evidence="3">
    <location>
        <begin position="776"/>
        <end position="836"/>
    </location>
</feature>
<feature type="site" description="Cleavage; by ST14/MT-SP1">
    <location>
        <begin position="368"/>
        <end position="369"/>
    </location>
</feature>
<feature type="modified residue" description="Phosphotyrosine" evidence="8">
    <location>
        <position position="734"/>
    </location>
</feature>
<feature type="glycosylation site" description="N-linked (GlcNAc...) asparagine" evidence="2">
    <location>
        <position position="39"/>
    </location>
</feature>
<feature type="glycosylation site" description="N-linked (GlcNAc...) asparagine" evidence="2">
    <location>
        <position position="122"/>
    </location>
</feature>
<feature type="glycosylation site" description="N-linked (GlcNAc...) asparagine" evidence="2">
    <location>
        <position position="180"/>
    </location>
</feature>
<feature type="glycosylation site" description="N-linked (GlcNAc...) asparagine" evidence="2">
    <location>
        <position position="205"/>
    </location>
</feature>
<feature type="glycosylation site" description="N-linked (GlcNAc...) asparagine" evidence="2">
    <location>
        <position position="270"/>
    </location>
</feature>
<feature type="glycosylation site" description="N-linked (GlcNAc...) asparagine" evidence="2">
    <location>
        <position position="310"/>
    </location>
</feature>
<feature type="glycosylation site" description="N-linked (GlcNAc...) asparagine" evidence="2">
    <location>
        <position position="386"/>
    </location>
</feature>
<feature type="disulfide bond" evidence="1">
    <location>
        <begin position="476"/>
        <end position="499"/>
    </location>
</feature>
<feature type="splice variant" id="VSP_017432" description="In isoform 2." evidence="16">
    <location>
        <begin position="1"/>
        <end position="187"/>
    </location>
</feature>
<feature type="splice variant" id="VSP_017433" description="In isoform 3." evidence="15 17">
    <original>NK</original>
    <variation>SE</variation>
    <location>
        <begin position="342"/>
        <end position="343"/>
    </location>
</feature>
<feature type="splice variant" id="VSP_017434" description="In isoform 3." evidence="15 17">
    <location>
        <begin position="344"/>
        <end position="836"/>
    </location>
</feature>
<feature type="sequence variant" id="VAR_025498" description="In dbSNP:rs3749191." evidence="5 7 8">
    <original>Q</original>
    <variation>R</variation>
    <location>
        <position position="525"/>
    </location>
</feature>
<feature type="sequence variant" id="VAR_055095" description="In dbSNP:rs35428731." evidence="10">
    <original>A</original>
    <variation>V</variation>
    <location>
        <position position="673"/>
    </location>
</feature>
<feature type="sequence variant" id="VAR_025499" description="In dbSNP:rs9874077." evidence="4 5 7">
    <original>D</original>
    <variation>G</variation>
    <location>
        <position position="709"/>
    </location>
</feature>
<feature type="mutagenesis site" description="Impaired association with SRC." evidence="11">
    <original>Y</original>
    <variation>F</variation>
    <location>
        <position position="734"/>
    </location>
</feature>
<feature type="mutagenesis site" description="Impaired association with protein kinase PRKCG but not with SRC." evidence="11">
    <original>Y</original>
    <variation>F</variation>
    <location>
        <position position="762"/>
    </location>
</feature>
<feature type="sequence conflict" description="In Ref. 5; BAB14695." evidence="18" ref="5">
    <original>W</original>
    <variation>C</variation>
    <location>
        <position position="252"/>
    </location>
</feature>
<feature type="sequence conflict" description="In Ref. 5; BAB15388." evidence="18" ref="5">
    <original>Y</original>
    <variation>D</variation>
    <location>
        <position position="284"/>
    </location>
</feature>
<feature type="sequence conflict" description="In Ref. 5; BAB14695." evidence="18" ref="5">
    <original>S</original>
    <variation>G</variation>
    <location>
        <position position="434"/>
    </location>
</feature>
<feature type="sequence conflict" description="In Ref. 5; BAB15388." evidence="18" ref="5">
    <original>K</original>
    <variation>R</variation>
    <location>
        <position position="466"/>
    </location>
</feature>
<feature type="sequence conflict" description="In Ref. 2; AAO33397 and 5; BAB15511." evidence="18" ref="2 5">
    <original>N</original>
    <variation>S</variation>
    <location>
        <position position="827"/>
    </location>
</feature>
<reference key="1">
    <citation type="journal article" date="2001" name="Oncogene">
        <title>Identification of a novel gene, CDCP1, overexpressed in human colorectal cancer.</title>
        <authorList>
            <person name="Scherl-Mostageer M."/>
            <person name="Sommergruber W."/>
            <person name="Abseher R."/>
            <person name="Hauptmann R."/>
            <person name="Ambros P."/>
            <person name="Schweifer N."/>
        </authorList>
    </citation>
    <scope>NUCLEOTIDE SEQUENCE [MRNA] (ISOFORM 1)</scope>
    <scope>FUNCTION</scope>
    <scope>TISSUE SPECIFICITY</scope>
    <scope>VARIANT GLY-709</scope>
</reference>
<reference key="2">
    <citation type="journal article" date="2003" name="Oncogene">
        <title>Subtractive immunization using highly metastatic human tumor cells identifies SIMA135/CDCP1, a 135 kDa cell surface phosphorylated glycoprotein antigen.</title>
        <authorList>
            <person name="Hooper J.D."/>
            <person name="Zijlstra A."/>
            <person name="Aimes R.T."/>
            <person name="Liang H."/>
            <person name="Claassen G.F."/>
            <person name="Tarin D."/>
            <person name="Testa J.E."/>
            <person name="Quigley J.P."/>
        </authorList>
    </citation>
    <scope>NUCLEOTIDE SEQUENCE [MRNA] (ISOFORM 1)</scope>
    <scope>PROTEIN SEQUENCE OF 30-48; 281-293 AND 427-438</scope>
    <scope>GLYCOSYLATION</scope>
    <scope>PHOSPHORYLATION</scope>
    <scope>SHEDDING</scope>
    <scope>SUBCELLULAR LOCATION</scope>
    <scope>TISSUE SPECIFICITY</scope>
    <scope>VARIANTS ARG-525 AND GLY-709</scope>
</reference>
<reference key="3">
    <citation type="journal article" date="2005" name="Oncogene">
        <title>Adhesion signaling by a novel mitotic substrate of src kinases.</title>
        <authorList>
            <person name="Bhatt A.S."/>
            <person name="Erdjument-Bromage H."/>
            <person name="Tempst P."/>
            <person name="Craik C.S."/>
            <person name="Moasser M.M."/>
        </authorList>
    </citation>
    <scope>NUCLEOTIDE SEQUENCE [MRNA] (ISOFORM 1)</scope>
    <scope>PROTEIN SEQUENCE OF 30-34 AND 369-375</scope>
    <scope>IDENTIFICATION BY MASS SPECTROMETRY</scope>
    <scope>PHOSPHORYLATION</scope>
    <scope>GLYCOSYLATION</scope>
    <scope>TISSUE SPECIFICITY</scope>
    <scope>INTERACTION WITH CDH2; CDH3; SDC1; SDC4 AND ST14</scope>
    <scope>FUNCTION</scope>
</reference>
<reference key="4">
    <citation type="journal article" date="2003" name="Genome Res.">
        <title>The secreted protein discovery initiative (SPDI), a large-scale effort to identify novel human secreted and transmembrane proteins: a bioinformatics assessment.</title>
        <authorList>
            <person name="Clark H.F."/>
            <person name="Gurney A.L."/>
            <person name="Abaya E."/>
            <person name="Baker K."/>
            <person name="Baldwin D.T."/>
            <person name="Brush J."/>
            <person name="Chen J."/>
            <person name="Chow B."/>
            <person name="Chui C."/>
            <person name="Crowley C."/>
            <person name="Currell B."/>
            <person name="Deuel B."/>
            <person name="Dowd P."/>
            <person name="Eaton D."/>
            <person name="Foster J.S."/>
            <person name="Grimaldi C."/>
            <person name="Gu Q."/>
            <person name="Hass P.E."/>
            <person name="Heldens S."/>
            <person name="Huang A."/>
            <person name="Kim H.S."/>
            <person name="Klimowski L."/>
            <person name="Jin Y."/>
            <person name="Johnson S."/>
            <person name="Lee J."/>
            <person name="Lewis L."/>
            <person name="Liao D."/>
            <person name="Mark M.R."/>
            <person name="Robbie E."/>
            <person name="Sanchez C."/>
            <person name="Schoenfeld J."/>
            <person name="Seshagiri S."/>
            <person name="Simmons L."/>
            <person name="Singh J."/>
            <person name="Smith V."/>
            <person name="Stinson J."/>
            <person name="Vagts A."/>
            <person name="Vandlen R.L."/>
            <person name="Watanabe C."/>
            <person name="Wieand D."/>
            <person name="Woods K."/>
            <person name="Xie M.-H."/>
            <person name="Yansura D.G."/>
            <person name="Yi S."/>
            <person name="Yu G."/>
            <person name="Yuan J."/>
            <person name="Zhang M."/>
            <person name="Zhang Z."/>
            <person name="Goddard A.D."/>
            <person name="Wood W.I."/>
            <person name="Godowski P.J."/>
            <person name="Gray A.M."/>
        </authorList>
    </citation>
    <scope>NUCLEOTIDE SEQUENCE [LARGE SCALE MRNA] (ISOFORM 3)</scope>
</reference>
<reference key="5">
    <citation type="journal article" date="2004" name="Nat. Genet.">
        <title>Complete sequencing and characterization of 21,243 full-length human cDNAs.</title>
        <authorList>
            <person name="Ota T."/>
            <person name="Suzuki Y."/>
            <person name="Nishikawa T."/>
            <person name="Otsuki T."/>
            <person name="Sugiyama T."/>
            <person name="Irie R."/>
            <person name="Wakamatsu A."/>
            <person name="Hayashi K."/>
            <person name="Sato H."/>
            <person name="Nagai K."/>
            <person name="Kimura K."/>
            <person name="Makita H."/>
            <person name="Sekine M."/>
            <person name="Obayashi M."/>
            <person name="Nishi T."/>
            <person name="Shibahara T."/>
            <person name="Tanaka T."/>
            <person name="Ishii S."/>
            <person name="Yamamoto J."/>
            <person name="Saito K."/>
            <person name="Kawai Y."/>
            <person name="Isono Y."/>
            <person name="Nakamura Y."/>
            <person name="Nagahari K."/>
            <person name="Murakami K."/>
            <person name="Yasuda T."/>
            <person name="Iwayanagi T."/>
            <person name="Wagatsuma M."/>
            <person name="Shiratori A."/>
            <person name="Sudo H."/>
            <person name="Hosoiri T."/>
            <person name="Kaku Y."/>
            <person name="Kodaira H."/>
            <person name="Kondo H."/>
            <person name="Sugawara M."/>
            <person name="Takahashi M."/>
            <person name="Kanda K."/>
            <person name="Yokoi T."/>
            <person name="Furuya T."/>
            <person name="Kikkawa E."/>
            <person name="Omura Y."/>
            <person name="Abe K."/>
            <person name="Kamihara K."/>
            <person name="Katsuta N."/>
            <person name="Sato K."/>
            <person name="Tanikawa M."/>
            <person name="Yamazaki M."/>
            <person name="Ninomiya K."/>
            <person name="Ishibashi T."/>
            <person name="Yamashita H."/>
            <person name="Murakawa K."/>
            <person name="Fujimori K."/>
            <person name="Tanai H."/>
            <person name="Kimata M."/>
            <person name="Watanabe M."/>
            <person name="Hiraoka S."/>
            <person name="Chiba Y."/>
            <person name="Ishida S."/>
            <person name="Ono Y."/>
            <person name="Takiguchi S."/>
            <person name="Watanabe S."/>
            <person name="Yosida M."/>
            <person name="Hotuta T."/>
            <person name="Kusano J."/>
            <person name="Kanehori K."/>
            <person name="Takahashi-Fujii A."/>
            <person name="Hara H."/>
            <person name="Tanase T.-O."/>
            <person name="Nomura Y."/>
            <person name="Togiya S."/>
            <person name="Komai F."/>
            <person name="Hara R."/>
            <person name="Takeuchi K."/>
            <person name="Arita M."/>
            <person name="Imose N."/>
            <person name="Musashino K."/>
            <person name="Yuuki H."/>
            <person name="Oshima A."/>
            <person name="Sasaki N."/>
            <person name="Aotsuka S."/>
            <person name="Yoshikawa Y."/>
            <person name="Matsunawa H."/>
            <person name="Ichihara T."/>
            <person name="Shiohata N."/>
            <person name="Sano S."/>
            <person name="Moriya S."/>
            <person name="Momiyama H."/>
            <person name="Satoh N."/>
            <person name="Takami S."/>
            <person name="Terashima Y."/>
            <person name="Suzuki O."/>
            <person name="Nakagawa S."/>
            <person name="Senoh A."/>
            <person name="Mizoguchi H."/>
            <person name="Goto Y."/>
            <person name="Shimizu F."/>
            <person name="Wakebe H."/>
            <person name="Hishigaki H."/>
            <person name="Watanabe T."/>
            <person name="Sugiyama A."/>
            <person name="Takemoto M."/>
            <person name="Kawakami B."/>
            <person name="Yamazaki M."/>
            <person name="Watanabe K."/>
            <person name="Kumagai A."/>
            <person name="Itakura S."/>
            <person name="Fukuzumi Y."/>
            <person name="Fujimori Y."/>
            <person name="Komiyama M."/>
            <person name="Tashiro H."/>
            <person name="Tanigami A."/>
            <person name="Fujiwara T."/>
            <person name="Ono T."/>
            <person name="Yamada K."/>
            <person name="Fujii Y."/>
            <person name="Ozaki K."/>
            <person name="Hirao M."/>
            <person name="Ohmori Y."/>
            <person name="Kawabata A."/>
            <person name="Hikiji T."/>
            <person name="Kobatake N."/>
            <person name="Inagaki H."/>
            <person name="Ikema Y."/>
            <person name="Okamoto S."/>
            <person name="Okitani R."/>
            <person name="Kawakami T."/>
            <person name="Noguchi S."/>
            <person name="Itoh T."/>
            <person name="Shigeta K."/>
            <person name="Senba T."/>
            <person name="Matsumura K."/>
            <person name="Nakajima Y."/>
            <person name="Mizuno T."/>
            <person name="Morinaga M."/>
            <person name="Sasaki M."/>
            <person name="Togashi T."/>
            <person name="Oyama M."/>
            <person name="Hata H."/>
            <person name="Watanabe M."/>
            <person name="Komatsu T."/>
            <person name="Mizushima-Sugano J."/>
            <person name="Satoh T."/>
            <person name="Shirai Y."/>
            <person name="Takahashi Y."/>
            <person name="Nakagawa K."/>
            <person name="Okumura K."/>
            <person name="Nagase T."/>
            <person name="Nomura N."/>
            <person name="Kikuchi H."/>
            <person name="Masuho Y."/>
            <person name="Yamashita R."/>
            <person name="Nakai K."/>
            <person name="Yada T."/>
            <person name="Nakamura Y."/>
            <person name="Ohara O."/>
            <person name="Isogai T."/>
            <person name="Sugano S."/>
        </authorList>
    </citation>
    <scope>NUCLEOTIDE SEQUENCE [LARGE SCALE MRNA] (ISOFORMS 1 AND 2)</scope>
    <scope>VARIANTS ARG-525 AND GLY-709</scope>
    <source>
        <tissue>Placenta</tissue>
    </source>
</reference>
<reference key="6">
    <citation type="journal article" date="2006" name="Nature">
        <title>The DNA sequence, annotation and analysis of human chromosome 3.</title>
        <authorList>
            <person name="Muzny D.M."/>
            <person name="Scherer S.E."/>
            <person name="Kaul R."/>
            <person name="Wang J."/>
            <person name="Yu J."/>
            <person name="Sudbrak R."/>
            <person name="Buhay C.J."/>
            <person name="Chen R."/>
            <person name="Cree A."/>
            <person name="Ding Y."/>
            <person name="Dugan-Rocha S."/>
            <person name="Gill R."/>
            <person name="Gunaratne P."/>
            <person name="Harris R.A."/>
            <person name="Hawes A.C."/>
            <person name="Hernandez J."/>
            <person name="Hodgson A.V."/>
            <person name="Hume J."/>
            <person name="Jackson A."/>
            <person name="Khan Z.M."/>
            <person name="Kovar-Smith C."/>
            <person name="Lewis L.R."/>
            <person name="Lozado R.J."/>
            <person name="Metzker M.L."/>
            <person name="Milosavljevic A."/>
            <person name="Miner G.R."/>
            <person name="Morgan M.B."/>
            <person name="Nazareth L.V."/>
            <person name="Scott G."/>
            <person name="Sodergren E."/>
            <person name="Song X.-Z."/>
            <person name="Steffen D."/>
            <person name="Wei S."/>
            <person name="Wheeler D.A."/>
            <person name="Wright M.W."/>
            <person name="Worley K.C."/>
            <person name="Yuan Y."/>
            <person name="Zhang Z."/>
            <person name="Adams C.Q."/>
            <person name="Ansari-Lari M.A."/>
            <person name="Ayele M."/>
            <person name="Brown M.J."/>
            <person name="Chen G."/>
            <person name="Chen Z."/>
            <person name="Clendenning J."/>
            <person name="Clerc-Blankenburg K.P."/>
            <person name="Chen R."/>
            <person name="Chen Z."/>
            <person name="Davis C."/>
            <person name="Delgado O."/>
            <person name="Dinh H.H."/>
            <person name="Dong W."/>
            <person name="Draper H."/>
            <person name="Ernst S."/>
            <person name="Fu G."/>
            <person name="Gonzalez-Garay M.L."/>
            <person name="Garcia D.K."/>
            <person name="Gillett W."/>
            <person name="Gu J."/>
            <person name="Hao B."/>
            <person name="Haugen E."/>
            <person name="Havlak P."/>
            <person name="He X."/>
            <person name="Hennig S."/>
            <person name="Hu S."/>
            <person name="Huang W."/>
            <person name="Jackson L.R."/>
            <person name="Jacob L.S."/>
            <person name="Kelly S.H."/>
            <person name="Kube M."/>
            <person name="Levy R."/>
            <person name="Li Z."/>
            <person name="Liu B."/>
            <person name="Liu J."/>
            <person name="Liu W."/>
            <person name="Lu J."/>
            <person name="Maheshwari M."/>
            <person name="Nguyen B.-V."/>
            <person name="Okwuonu G.O."/>
            <person name="Palmeiri A."/>
            <person name="Pasternak S."/>
            <person name="Perez L.M."/>
            <person name="Phelps K.A."/>
            <person name="Plopper F.J."/>
            <person name="Qiang B."/>
            <person name="Raymond C."/>
            <person name="Rodriguez R."/>
            <person name="Saenphimmachak C."/>
            <person name="Santibanez J."/>
            <person name="Shen H."/>
            <person name="Shen Y."/>
            <person name="Subramanian S."/>
            <person name="Tabor P.E."/>
            <person name="Verduzco D."/>
            <person name="Waldron L."/>
            <person name="Wang J."/>
            <person name="Wang J."/>
            <person name="Wang Q."/>
            <person name="Williams G.A."/>
            <person name="Wong G.K.-S."/>
            <person name="Yao Z."/>
            <person name="Zhang J."/>
            <person name="Zhang X."/>
            <person name="Zhao G."/>
            <person name="Zhou J."/>
            <person name="Zhou Y."/>
            <person name="Nelson D."/>
            <person name="Lehrach H."/>
            <person name="Reinhardt R."/>
            <person name="Naylor S.L."/>
            <person name="Yang H."/>
            <person name="Olson M."/>
            <person name="Weinstock G."/>
            <person name="Gibbs R.A."/>
        </authorList>
    </citation>
    <scope>NUCLEOTIDE SEQUENCE [LARGE SCALE GENOMIC DNA]</scope>
</reference>
<reference key="7">
    <citation type="journal article" date="2004" name="Genome Res.">
        <title>The status, quality, and expansion of the NIH full-length cDNA project: the Mammalian Gene Collection (MGC).</title>
        <authorList>
            <consortium name="The MGC Project Team"/>
        </authorList>
    </citation>
    <scope>NUCLEOTIDE SEQUENCE [LARGE SCALE MRNA] (ISOFORM 3)</scope>
    <scope>NUCLEOTIDE SEQUENCE [LARGE SCALE MRNA] OF 1-697 (ISOFORM 1)</scope>
    <scope>VARIANT VAL-673</scope>
    <source>
        <tissue>Kidney</tissue>
    </source>
</reference>
<reference key="8">
    <citation type="journal article" date="2004" name="J. Biol. Chem.">
        <title>Adhesion or plasmin regulates tyrosine phosphorylation of a novel membrane glycoprotein p80/gp140/CUB domain-containing protein 1 in epithelia.</title>
        <authorList>
            <person name="Brown T.A."/>
            <person name="Yang T.M."/>
            <person name="Zaitsevskaia T."/>
            <person name="Xia Y."/>
            <person name="Dunn C.A."/>
            <person name="Sigle R.O."/>
            <person name="Knudsen B."/>
            <person name="Carter W.G."/>
        </authorList>
    </citation>
    <scope>NUCLEOTIDE SEQUENCE [MRNA] OF 1-691 (ISOFORM 1)</scope>
    <scope>IDENTIFICATION BY MASS SPECTROMETRY</scope>
    <scope>PHOSPHORYLATION AT TYR-734</scope>
    <scope>GLYCOSYLATION</scope>
    <scope>TRYPTIC CLEAVAGE</scope>
    <scope>VARIANT ARG-525</scope>
    <source>
        <tissue>Epidermis</tissue>
    </source>
</reference>
<reference key="9">
    <citation type="journal article" date="1996" name="J. Cell Biol.">
        <title>Anchorage mediated by integrin alpha6beta4 to laminin 5 (epiligrin) regulates tyrosine phosphorylation of a membrane-associated 80-kD protein.</title>
        <authorList>
            <person name="Xia Y."/>
            <person name="Gil S.G."/>
            <person name="Carter W.G."/>
        </authorList>
    </citation>
    <scope>FUNCTION</scope>
    <scope>PHOSPHORYLATION</scope>
    <source>
        <tissue>Epidermis</tissue>
    </source>
</reference>
<reference key="10">
    <citation type="journal article" date="2003" name="Ann. N. Y. Acad. Sci.">
        <title>CDCP1 is a novel marker for hematopoietic stem cells.</title>
        <authorList>
            <person name="Conze T."/>
            <person name="Lammers R."/>
            <person name="Kuci S."/>
            <person name="Scherl-Mostageer M."/>
            <person name="Schweifer N."/>
            <person name="Kanz L."/>
            <person name="Buehring H.-J."/>
        </authorList>
    </citation>
    <scope>FUNCTION</scope>
</reference>
<reference key="11">
    <citation type="journal article" date="2004" name="Stem Cells">
        <title>CDCP1 identifies a broad spectrum of normal and malignant stem/progenitor cell subsets of hematopoietic and nonhematopoietic origin.</title>
        <authorList>
            <person name="Buehring H.-J."/>
            <person name="Kuci S."/>
            <person name="Conze T."/>
            <person name="Rathke G."/>
            <person name="Bartolovic K."/>
            <person name="Gruenebach F."/>
            <person name="Scherl-Mostageer M."/>
            <person name="Bruemmendorf T.H."/>
            <person name="Schweifer N."/>
            <person name="Lammers R."/>
        </authorList>
    </citation>
    <scope>FUNCTION</scope>
    <scope>TISSUE SPECIFICITY</scope>
</reference>
<reference key="12">
    <citation type="journal article" date="2005" name="Cell">
        <title>The C2 domain of PKCdelta is a phosphotyrosine binding domain.</title>
        <authorList>
            <person name="Benes C.H."/>
            <person name="Wu N."/>
            <person name="Elia A.E.H."/>
            <person name="Dharia T."/>
            <person name="Cantley L.C."/>
            <person name="Soltoff S.P."/>
        </authorList>
    </citation>
    <scope>IDENTIFICATION BY MASS SPECTROMETRY</scope>
    <scope>INTERACTION WITH SRC AND PRKCG</scope>
    <scope>MUTAGENESIS OF TYR-734 AND TYR-762</scope>
</reference>
<reference key="13">
    <citation type="journal article" date="2006" name="Proteomics">
        <title>Proteomic analysis of the tetraspanin web using LC-ESI-MS/MS and MALDI-FTICR-MS.</title>
        <authorList>
            <person name="Andre M."/>
            <person name="Le Caer J.-P."/>
            <person name="Greco C."/>
            <person name="Planchon S."/>
            <person name="El Nemer W."/>
            <person name="Boucheix C."/>
            <person name="Rubinstein E."/>
            <person name="Chamot-Rooke J."/>
            <person name="Le Naour F."/>
        </authorList>
    </citation>
    <scope>IDENTIFICATION BY MASS SPECTROMETRY</scope>
    <scope>FUNCTION</scope>
</reference>
<reference key="14">
    <citation type="journal article" date="2007" name="FEBS Lett.">
        <title>Expression of the CUB domain containing protein 1 (CDCP1) gene in colorectal tumour cells.</title>
        <authorList>
            <person name="Perry S.E."/>
            <person name="Robinson P."/>
            <person name="Melcher A."/>
            <person name="Quirke P."/>
            <person name="Buehring H.-J."/>
            <person name="Cook G.P."/>
            <person name="Blair G.E."/>
        </authorList>
    </citation>
    <scope>SUBCELLULAR LOCATION</scope>
</reference>
<reference key="15">
    <citation type="journal article" date="2011" name="BMC Syst. Biol.">
        <title>Initial characterization of the human central proteome.</title>
        <authorList>
            <person name="Burkard T.R."/>
            <person name="Planyavsky M."/>
            <person name="Kaupe I."/>
            <person name="Breitwieser F.P."/>
            <person name="Buerckstuemmer T."/>
            <person name="Bennett K.L."/>
            <person name="Superti-Furga G."/>
            <person name="Colinge J."/>
        </authorList>
    </citation>
    <scope>IDENTIFICATION BY MASS SPECTROMETRY [LARGE SCALE ANALYSIS]</scope>
</reference>
<protein>
    <recommendedName>
        <fullName>CUB domain-containing protein 1</fullName>
    </recommendedName>
    <alternativeName>
        <fullName>Membrane glycoprotein gp140</fullName>
    </alternativeName>
    <alternativeName>
        <fullName>Subtractive immunization M plus HEp3-associated 135 kDa protein</fullName>
        <shortName>SIMA135</shortName>
    </alternativeName>
    <alternativeName>
        <fullName>Transmembrane and associated with src kinases</fullName>
    </alternativeName>
    <cdAntigenName>CD318</cdAntigenName>
</protein>
<accession>Q9H5V8</accession>
<accession>Q49UB4</accession>
<accession>Q6NT71</accession>
<accession>Q6U9Y2</accession>
<accession>Q8WU91</accession>
<accession>Q96QU7</accession>
<accession>Q9H676</accession>
<accession>Q9H8C2</accession>
<keyword id="KW-0025">Alternative splicing</keyword>
<keyword id="KW-1003">Cell membrane</keyword>
<keyword id="KW-0903">Direct protein sequencing</keyword>
<keyword id="KW-1015">Disulfide bond</keyword>
<keyword id="KW-0325">Glycoprotein</keyword>
<keyword id="KW-0472">Membrane</keyword>
<keyword id="KW-0597">Phosphoprotein</keyword>
<keyword id="KW-1267">Proteomics identification</keyword>
<keyword id="KW-1185">Reference proteome</keyword>
<keyword id="KW-0964">Secreted</keyword>
<keyword id="KW-0732">Signal</keyword>
<keyword id="KW-0812">Transmembrane</keyword>
<keyword id="KW-1133">Transmembrane helix</keyword>
<evidence type="ECO:0000250" key="1"/>
<evidence type="ECO:0000255" key="2"/>
<evidence type="ECO:0000256" key="3">
    <source>
        <dbReference type="SAM" id="MobiDB-lite"/>
    </source>
</evidence>
<evidence type="ECO:0000269" key="4">
    <source>
    </source>
</evidence>
<evidence type="ECO:0000269" key="5">
    <source>
    </source>
</evidence>
<evidence type="ECO:0000269" key="6">
    <source>
    </source>
</evidence>
<evidence type="ECO:0000269" key="7">
    <source>
    </source>
</evidence>
<evidence type="ECO:0000269" key="8">
    <source>
    </source>
</evidence>
<evidence type="ECO:0000269" key="9">
    <source>
    </source>
</evidence>
<evidence type="ECO:0000269" key="10">
    <source>
    </source>
</evidence>
<evidence type="ECO:0000269" key="11">
    <source>
    </source>
</evidence>
<evidence type="ECO:0000269" key="12">
    <source>
    </source>
</evidence>
<evidence type="ECO:0000269" key="13">
    <source>
    </source>
</evidence>
<evidence type="ECO:0000269" key="14">
    <source>
    </source>
</evidence>
<evidence type="ECO:0000303" key="15">
    <source>
    </source>
</evidence>
<evidence type="ECO:0000303" key="16">
    <source>
    </source>
</evidence>
<evidence type="ECO:0000303" key="17">
    <source>
    </source>
</evidence>
<evidence type="ECO:0000305" key="18"/>
<dbReference type="EMBL" id="AY026461">
    <property type="protein sequence ID" value="AAK02058.1"/>
    <property type="molecule type" value="mRNA"/>
</dbReference>
<dbReference type="EMBL" id="AF468010">
    <property type="protein sequence ID" value="AAO33397.1"/>
    <property type="molecule type" value="mRNA"/>
</dbReference>
<dbReference type="EMBL" id="AY167484">
    <property type="protein sequence ID" value="AAO34538.1"/>
    <property type="molecule type" value="mRNA"/>
</dbReference>
<dbReference type="EMBL" id="AY358779">
    <property type="protein sequence ID" value="AAQ89139.1"/>
    <property type="molecule type" value="mRNA"/>
</dbReference>
<dbReference type="EMBL" id="AK023834">
    <property type="protein sequence ID" value="BAB14695.1"/>
    <property type="molecule type" value="mRNA"/>
</dbReference>
<dbReference type="EMBL" id="AK026187">
    <property type="protein sequence ID" value="BAB15388.1"/>
    <property type="status" value="ALT_INIT"/>
    <property type="molecule type" value="mRNA"/>
</dbReference>
<dbReference type="EMBL" id="AK026622">
    <property type="protein sequence ID" value="BAB15511.1"/>
    <property type="molecule type" value="mRNA"/>
</dbReference>
<dbReference type="EMBL" id="AC104165">
    <property type="status" value="NOT_ANNOTATED_CDS"/>
    <property type="molecule type" value="Genomic_DNA"/>
</dbReference>
<dbReference type="EMBL" id="AC105902">
    <property type="status" value="NOT_ANNOTATED_CDS"/>
    <property type="molecule type" value="Genomic_DNA"/>
</dbReference>
<dbReference type="EMBL" id="BC021099">
    <property type="protein sequence ID" value="AAH21099.1"/>
    <property type="molecule type" value="mRNA"/>
</dbReference>
<dbReference type="EMBL" id="BC069254">
    <property type="protein sequence ID" value="AAH69254.1"/>
    <property type="molecule type" value="mRNA"/>
</dbReference>
<dbReference type="EMBL" id="AY375452">
    <property type="protein sequence ID" value="AAR21289.1"/>
    <property type="molecule type" value="mRNA"/>
</dbReference>
<dbReference type="CCDS" id="CCDS2727.1">
    <molecule id="Q9H5V8-1"/>
</dbReference>
<dbReference type="CCDS" id="CCDS46812.1">
    <molecule id="Q9H5V8-3"/>
</dbReference>
<dbReference type="RefSeq" id="NP_073753.3">
    <molecule id="Q9H5V8-1"/>
    <property type="nucleotide sequence ID" value="NM_022842.4"/>
</dbReference>
<dbReference type="RefSeq" id="NP_835488.1">
    <molecule id="Q9H5V8-3"/>
    <property type="nucleotide sequence ID" value="NM_178181.3"/>
</dbReference>
<dbReference type="SASBDB" id="Q9H5V8"/>
<dbReference type="BioGRID" id="122336">
    <property type="interactions" value="22"/>
</dbReference>
<dbReference type="CORUM" id="Q9H5V8"/>
<dbReference type="DIP" id="DIP-33861N"/>
<dbReference type="FunCoup" id="Q9H5V8">
    <property type="interactions" value="336"/>
</dbReference>
<dbReference type="IntAct" id="Q9H5V8">
    <property type="interactions" value="27"/>
</dbReference>
<dbReference type="MINT" id="Q9H5V8"/>
<dbReference type="STRING" id="9606.ENSP00000296129"/>
<dbReference type="GlyConnect" id="1160">
    <property type="glycosylation" value="13 N-Linked glycans (8 sites)"/>
</dbReference>
<dbReference type="GlyCosmos" id="Q9H5V8">
    <property type="glycosylation" value="9 sites, 12 glycans"/>
</dbReference>
<dbReference type="GlyGen" id="Q9H5V8">
    <property type="glycosylation" value="11 sites, 38 N-linked glycans (10 sites), 1 O-linked glycan (1 site)"/>
</dbReference>
<dbReference type="iPTMnet" id="Q9H5V8"/>
<dbReference type="PhosphoSitePlus" id="Q9H5V8"/>
<dbReference type="SwissPalm" id="Q9H5V8"/>
<dbReference type="BioMuta" id="CDCP1"/>
<dbReference type="DMDM" id="317373455"/>
<dbReference type="CPTAC" id="CPTAC-2211"/>
<dbReference type="jPOST" id="Q9H5V8"/>
<dbReference type="MassIVE" id="Q9H5V8"/>
<dbReference type="PaxDb" id="9606-ENSP00000296129"/>
<dbReference type="PeptideAtlas" id="Q9H5V8"/>
<dbReference type="ProteomicsDB" id="80933">
    <molecule id="Q9H5V8-1"/>
</dbReference>
<dbReference type="ProteomicsDB" id="80934">
    <molecule id="Q9H5V8-2"/>
</dbReference>
<dbReference type="ProteomicsDB" id="80935">
    <molecule id="Q9H5V8-3"/>
</dbReference>
<dbReference type="Pumba" id="Q9H5V8"/>
<dbReference type="ABCD" id="Q9H5V8">
    <property type="antibodies" value="13 sequenced antibodies"/>
</dbReference>
<dbReference type="Antibodypedia" id="2564">
    <property type="antibodies" value="920 antibodies from 43 providers"/>
</dbReference>
<dbReference type="DNASU" id="64866"/>
<dbReference type="Ensembl" id="ENST00000296129.6">
    <molecule id="Q9H5V8-1"/>
    <property type="protein sequence ID" value="ENSP00000296129.1"/>
    <property type="gene ID" value="ENSG00000163814.8"/>
</dbReference>
<dbReference type="Ensembl" id="ENST00000425231.2">
    <molecule id="Q9H5V8-3"/>
    <property type="protein sequence ID" value="ENSP00000399342.2"/>
    <property type="gene ID" value="ENSG00000163814.8"/>
</dbReference>
<dbReference type="GeneID" id="64866"/>
<dbReference type="KEGG" id="hsa:64866"/>
<dbReference type="MANE-Select" id="ENST00000296129.6">
    <property type="protein sequence ID" value="ENSP00000296129.1"/>
    <property type="RefSeq nucleotide sequence ID" value="NM_022842.5"/>
    <property type="RefSeq protein sequence ID" value="NP_073753.3"/>
</dbReference>
<dbReference type="UCSC" id="uc003com.5">
    <molecule id="Q9H5V8-1"/>
    <property type="organism name" value="human"/>
</dbReference>
<dbReference type="AGR" id="HGNC:24357"/>
<dbReference type="CTD" id="64866"/>
<dbReference type="DisGeNET" id="64866"/>
<dbReference type="GeneCards" id="CDCP1"/>
<dbReference type="HGNC" id="HGNC:24357">
    <property type="gene designation" value="CDCP1"/>
</dbReference>
<dbReference type="HPA" id="ENSG00000163814">
    <property type="expression patterns" value="Tissue enhanced (esophagus)"/>
</dbReference>
<dbReference type="MIM" id="611735">
    <property type="type" value="gene"/>
</dbReference>
<dbReference type="neXtProt" id="NX_Q9H5V8"/>
<dbReference type="OpenTargets" id="ENSG00000163814"/>
<dbReference type="PharmGKB" id="PA142672140"/>
<dbReference type="VEuPathDB" id="HostDB:ENSG00000163814"/>
<dbReference type="eggNOG" id="ENOG502QVKN">
    <property type="taxonomic scope" value="Eukaryota"/>
</dbReference>
<dbReference type="GeneTree" id="ENSGT00390000010209"/>
<dbReference type="HOGENOM" id="CLU_007498_0_0_1"/>
<dbReference type="InParanoid" id="Q9H5V8"/>
<dbReference type="OMA" id="IACETGR"/>
<dbReference type="OrthoDB" id="8960034at2759"/>
<dbReference type="PAN-GO" id="Q9H5V8">
    <property type="GO annotations" value="0 GO annotations based on evolutionary models"/>
</dbReference>
<dbReference type="PhylomeDB" id="Q9H5V8"/>
<dbReference type="TreeFam" id="TF331392"/>
<dbReference type="PathwayCommons" id="Q9H5V8"/>
<dbReference type="SignaLink" id="Q9H5V8"/>
<dbReference type="SIGNOR" id="Q9H5V8"/>
<dbReference type="BioGRID-ORCS" id="64866">
    <property type="hits" value="11 hits in 1169 CRISPR screens"/>
</dbReference>
<dbReference type="ChiTaRS" id="CDCP1">
    <property type="organism name" value="human"/>
</dbReference>
<dbReference type="GeneWiki" id="CDCP1"/>
<dbReference type="GenomeRNAi" id="64866"/>
<dbReference type="Pharos" id="Q9H5V8">
    <property type="development level" value="Tbio"/>
</dbReference>
<dbReference type="PRO" id="PR:Q9H5V8"/>
<dbReference type="Proteomes" id="UP000005640">
    <property type="component" value="Chromosome 3"/>
</dbReference>
<dbReference type="RNAct" id="Q9H5V8">
    <property type="molecule type" value="protein"/>
</dbReference>
<dbReference type="Bgee" id="ENSG00000163814">
    <property type="expression patterns" value="Expressed in gingival epithelium and 135 other cell types or tissues"/>
</dbReference>
<dbReference type="GO" id="GO:0005576">
    <property type="term" value="C:extracellular region"/>
    <property type="evidence" value="ECO:0007669"/>
    <property type="project" value="UniProtKB-SubCell"/>
</dbReference>
<dbReference type="GO" id="GO:0005886">
    <property type="term" value="C:plasma membrane"/>
    <property type="evidence" value="ECO:0007669"/>
    <property type="project" value="UniProtKB-SubCell"/>
</dbReference>
<dbReference type="InterPro" id="IPR038811">
    <property type="entry name" value="CDCP1"/>
</dbReference>
<dbReference type="InterPro" id="IPR056266">
    <property type="entry name" value="CDCP1_CUB_3rd_6th"/>
</dbReference>
<dbReference type="InterPro" id="IPR056268">
    <property type="entry name" value="CUB_CDCP1_1st"/>
</dbReference>
<dbReference type="InterPro" id="IPR056269">
    <property type="entry name" value="CUB_CDCP1_2nd_5th"/>
</dbReference>
<dbReference type="InterPro" id="IPR056965">
    <property type="entry name" value="CUB_CDCP1_4th"/>
</dbReference>
<dbReference type="InterPro" id="IPR035914">
    <property type="entry name" value="Sperma_CUB_dom_sf"/>
</dbReference>
<dbReference type="PANTHER" id="PTHR14477">
    <property type="entry name" value="CUB DOMAIN-CONTAINING PROTEIN 1"/>
    <property type="match status" value="1"/>
</dbReference>
<dbReference type="PANTHER" id="PTHR14477:SF1">
    <property type="entry name" value="CUB DOMAIN-CONTAINING PROTEIN 1"/>
    <property type="match status" value="1"/>
</dbReference>
<dbReference type="Pfam" id="PF23665">
    <property type="entry name" value="CDCP1_CUB_6"/>
    <property type="match status" value="2"/>
</dbReference>
<dbReference type="Pfam" id="PF23667">
    <property type="entry name" value="CUB_CDCP1_1"/>
    <property type="match status" value="1"/>
</dbReference>
<dbReference type="Pfam" id="PF23668">
    <property type="entry name" value="CUB_CDCP1_2"/>
    <property type="match status" value="2"/>
</dbReference>
<dbReference type="Pfam" id="PF25142">
    <property type="entry name" value="CUB_CDCP1_4th"/>
    <property type="match status" value="1"/>
</dbReference>
<dbReference type="SUPFAM" id="SSF49854">
    <property type="entry name" value="Spermadhesin, CUB domain"/>
    <property type="match status" value="1"/>
</dbReference>
<organism>
    <name type="scientific">Homo sapiens</name>
    <name type="common">Human</name>
    <dbReference type="NCBI Taxonomy" id="9606"/>
    <lineage>
        <taxon>Eukaryota</taxon>
        <taxon>Metazoa</taxon>
        <taxon>Chordata</taxon>
        <taxon>Craniata</taxon>
        <taxon>Vertebrata</taxon>
        <taxon>Euteleostomi</taxon>
        <taxon>Mammalia</taxon>
        <taxon>Eutheria</taxon>
        <taxon>Euarchontoglires</taxon>
        <taxon>Primates</taxon>
        <taxon>Haplorrhini</taxon>
        <taxon>Catarrhini</taxon>
        <taxon>Hominidae</taxon>
        <taxon>Homo</taxon>
    </lineage>
</organism>
<proteinExistence type="evidence at protein level"/>
<name>CDCP1_HUMAN</name>
<sequence length="836" mass="92932">MAGLNCGVSIALLGVLLLGAARLPRGAEAFEIALPRESNITVLIKLGTPTLLAKPCYIVISKRHITMLSIKSGERIVFTFSCQSPENHFVIEIQKNIDCMSGPCPFGEVQLQPSTSLLPTLNRTFIWDVKAHKSIGLELQFSIPRLRQIGPGESCPDGVTHSISGRIDATVVRIGTFCSNGTVSRIKMQEGVKMALHLPWFHPRNVSGFSIANRSSIKRLCIIESVFEGEGSATLMSANYPEGFPEDELMTWQFVVPAHLRASVSFLNFNLSNCERKEERVEYYIPGSTTNPEVFKLEDKQPGNMAGNFNLSLQGCDQDAQSPGILRLQFQVLVQHPQNESNKIYVVDLSNERAMSLTIEPRPVKQSRKFVPGCFVCLESRTCSSNLTLTSGSKHKISFLCDDLTRLWMNVEKTISCTDHRYCQRKSYSLQVPSDILHLPVELHDFSWKLLVPKDRLSLVLVPAQKLQQHTHEKPCNTSFSYLVASAIPSQDLYFGSFCPGGSIKQIQVKQNISVTLRTFAPSFQQEASRQGLTVSFIPYFKEEGVFTVTPDTKSKVYLRTPNWDRGLPSLTSVSWNISVPRDQVACLTFFKERSGVVCQTGRAFMIIQEQRTRAEEIFSLDEDVLPKPSFHHHSFWVNISNCSPTSGKQLDLLFSVTLTPRTVDLTVILIAAVGGGVLLLSALGLIICCVKKKKKKTNKGPAVGIYNDNINTEMPRQPKKFQKGRKDNDSHVYAVIEDTMVYGHLLQDSSGSFLQPEVDTYRPFQGTMGVCPPSPPTICSRAPTAKLATEEPPPRSPPESESEPYTFSHPNNGDVSSKDTDIPLLNTQEPMEPAE</sequence>